<accession>Q71XE1</accession>
<comment type="subcellular location">
    <subcellularLocation>
        <location evidence="1">Cell membrane</location>
        <topology evidence="1">Multi-pass membrane protein</topology>
    </subcellularLocation>
</comment>
<comment type="similarity">
    <text evidence="3">Belongs to the UPF0754 family.</text>
</comment>
<protein>
    <recommendedName>
        <fullName>UPF0754 membrane protein LMOf2365_2257</fullName>
    </recommendedName>
</protein>
<gene>
    <name type="ordered locus">LMOf2365_2257</name>
</gene>
<proteinExistence type="inferred from homology"/>
<feature type="chain" id="PRO_0000388299" description="UPF0754 membrane protein LMOf2365_2257">
    <location>
        <begin position="1"/>
        <end position="377"/>
    </location>
</feature>
<feature type="transmembrane region" description="Helical" evidence="2">
    <location>
        <begin position="1"/>
        <end position="21"/>
    </location>
</feature>
<feature type="transmembrane region" description="Helical" evidence="2">
    <location>
        <begin position="357"/>
        <end position="377"/>
    </location>
</feature>
<dbReference type="EMBL" id="AE017262">
    <property type="protein sequence ID" value="AAT05024.1"/>
    <property type="molecule type" value="Genomic_DNA"/>
</dbReference>
<dbReference type="RefSeq" id="WP_003727831.1">
    <property type="nucleotide sequence ID" value="NC_002973.6"/>
</dbReference>
<dbReference type="SMR" id="Q71XE1"/>
<dbReference type="KEGG" id="lmf:LMOf2365_2257"/>
<dbReference type="HOGENOM" id="CLU_042384_0_0_9"/>
<dbReference type="GO" id="GO:0005886">
    <property type="term" value="C:plasma membrane"/>
    <property type="evidence" value="ECO:0007669"/>
    <property type="project" value="UniProtKB-SubCell"/>
</dbReference>
<dbReference type="InterPro" id="IPR007383">
    <property type="entry name" value="DUF445"/>
</dbReference>
<dbReference type="InterPro" id="IPR016991">
    <property type="entry name" value="UCP032178"/>
</dbReference>
<dbReference type="PANTHER" id="PTHR35791">
    <property type="entry name" value="UPF0754 MEMBRANE PROTEIN YHEB"/>
    <property type="match status" value="1"/>
</dbReference>
<dbReference type="PANTHER" id="PTHR35791:SF1">
    <property type="entry name" value="UPF0754 MEMBRANE PROTEIN YHEB"/>
    <property type="match status" value="1"/>
</dbReference>
<dbReference type="Pfam" id="PF04286">
    <property type="entry name" value="DUF445"/>
    <property type="match status" value="1"/>
</dbReference>
<dbReference type="PIRSF" id="PIRSF032178">
    <property type="entry name" value="UCP032178"/>
    <property type="match status" value="1"/>
</dbReference>
<name>Y2257_LISMF</name>
<organism>
    <name type="scientific">Listeria monocytogenes serotype 4b (strain F2365)</name>
    <dbReference type="NCBI Taxonomy" id="265669"/>
    <lineage>
        <taxon>Bacteria</taxon>
        <taxon>Bacillati</taxon>
        <taxon>Bacillota</taxon>
        <taxon>Bacilli</taxon>
        <taxon>Bacillales</taxon>
        <taxon>Listeriaceae</taxon>
        <taxon>Listeria</taxon>
    </lineage>
</organism>
<reference key="1">
    <citation type="journal article" date="2004" name="Nucleic Acids Res.">
        <title>Whole genome comparisons of serotype 4b and 1/2a strains of the food-borne pathogen Listeria monocytogenes reveal new insights into the core genome components of this species.</title>
        <authorList>
            <person name="Nelson K.E."/>
            <person name="Fouts D.E."/>
            <person name="Mongodin E.F."/>
            <person name="Ravel J."/>
            <person name="DeBoy R.T."/>
            <person name="Kolonay J.F."/>
            <person name="Rasko D.A."/>
            <person name="Angiuoli S.V."/>
            <person name="Gill S.R."/>
            <person name="Paulsen I.T."/>
            <person name="Peterson J.D."/>
            <person name="White O."/>
            <person name="Nelson W.C."/>
            <person name="Nierman W.C."/>
            <person name="Beanan M.J."/>
            <person name="Brinkac L.M."/>
            <person name="Daugherty S.C."/>
            <person name="Dodson R.J."/>
            <person name="Durkin A.S."/>
            <person name="Madupu R."/>
            <person name="Haft D.H."/>
            <person name="Selengut J."/>
            <person name="Van Aken S.E."/>
            <person name="Khouri H.M."/>
            <person name="Fedorova N."/>
            <person name="Forberger H.A."/>
            <person name="Tran B."/>
            <person name="Kathariou S."/>
            <person name="Wonderling L.D."/>
            <person name="Uhlich G.A."/>
            <person name="Bayles D.O."/>
            <person name="Luchansky J.B."/>
            <person name="Fraser C.M."/>
        </authorList>
    </citation>
    <scope>NUCLEOTIDE SEQUENCE [LARGE SCALE GENOMIC DNA]</scope>
    <source>
        <strain>F2365</strain>
    </source>
</reference>
<evidence type="ECO:0000250" key="1"/>
<evidence type="ECO:0000255" key="2"/>
<evidence type="ECO:0000305" key="3"/>
<sequence>MSVLFTILLMAVIGGFIGAMTNYIAIRMLFRPYKAIYLFNKRLPFTPGLIPKRRDELAEHIGKVVVSHLLTEDAIRARLLDENLQKEITDTITKMFHEKMQLETTPNELLHHFGYENAEIRSMTWVEKTLEKEINHFLTTKKTTKMSDLIPTMLESELTTKLPHVTERITSKMTLFVSSEEGKIQIKQMLQKFFEEHGKMGSMARMFINIDSFSEKIQQEGLKLIGQEDTKNLINQLLTTEWKNFEAKELQELIPTEKQAHLAGQLTSELIQTFPHEKLFNQPIQVMLRGYEAAITEKVIPFAVERMLDFVATHSAEIVERMDLAKLVETQIATFSLPEIEKLVVEISGRELKMITYLGGILGGFIGIIQGVLAMWI</sequence>
<keyword id="KW-1003">Cell membrane</keyword>
<keyword id="KW-0472">Membrane</keyword>
<keyword id="KW-0812">Transmembrane</keyword>
<keyword id="KW-1133">Transmembrane helix</keyword>